<gene>
    <name evidence="1" type="primary">ruvA</name>
    <name type="ordered locus">WP0988</name>
</gene>
<dbReference type="EMBL" id="AM999887">
    <property type="protein sequence ID" value="CAQ55096.1"/>
    <property type="molecule type" value="Genomic_DNA"/>
</dbReference>
<dbReference type="RefSeq" id="WP_007302375.1">
    <property type="nucleotide sequence ID" value="NC_010981.1"/>
</dbReference>
<dbReference type="SMR" id="B3CMH6"/>
<dbReference type="KEGG" id="wpi:WP0988"/>
<dbReference type="eggNOG" id="COG0632">
    <property type="taxonomic scope" value="Bacteria"/>
</dbReference>
<dbReference type="HOGENOM" id="CLU_087936_3_0_5"/>
<dbReference type="Proteomes" id="UP000008814">
    <property type="component" value="Chromosome"/>
</dbReference>
<dbReference type="GO" id="GO:0005737">
    <property type="term" value="C:cytoplasm"/>
    <property type="evidence" value="ECO:0007669"/>
    <property type="project" value="UniProtKB-SubCell"/>
</dbReference>
<dbReference type="GO" id="GO:0009379">
    <property type="term" value="C:Holliday junction helicase complex"/>
    <property type="evidence" value="ECO:0007669"/>
    <property type="project" value="InterPro"/>
</dbReference>
<dbReference type="GO" id="GO:0048476">
    <property type="term" value="C:Holliday junction resolvase complex"/>
    <property type="evidence" value="ECO:0007669"/>
    <property type="project" value="UniProtKB-UniRule"/>
</dbReference>
<dbReference type="GO" id="GO:0005524">
    <property type="term" value="F:ATP binding"/>
    <property type="evidence" value="ECO:0007669"/>
    <property type="project" value="InterPro"/>
</dbReference>
<dbReference type="GO" id="GO:0000400">
    <property type="term" value="F:four-way junction DNA binding"/>
    <property type="evidence" value="ECO:0007669"/>
    <property type="project" value="UniProtKB-UniRule"/>
</dbReference>
<dbReference type="GO" id="GO:0009378">
    <property type="term" value="F:four-way junction helicase activity"/>
    <property type="evidence" value="ECO:0007669"/>
    <property type="project" value="InterPro"/>
</dbReference>
<dbReference type="GO" id="GO:0006310">
    <property type="term" value="P:DNA recombination"/>
    <property type="evidence" value="ECO:0007669"/>
    <property type="project" value="UniProtKB-UniRule"/>
</dbReference>
<dbReference type="GO" id="GO:0006281">
    <property type="term" value="P:DNA repair"/>
    <property type="evidence" value="ECO:0007669"/>
    <property type="project" value="UniProtKB-UniRule"/>
</dbReference>
<dbReference type="CDD" id="cd14332">
    <property type="entry name" value="UBA_RuvA_C"/>
    <property type="match status" value="1"/>
</dbReference>
<dbReference type="Gene3D" id="1.10.150.20">
    <property type="entry name" value="5' to 3' exonuclease, C-terminal subdomain"/>
    <property type="match status" value="1"/>
</dbReference>
<dbReference type="Gene3D" id="1.10.8.10">
    <property type="entry name" value="DNA helicase RuvA subunit, C-terminal domain"/>
    <property type="match status" value="1"/>
</dbReference>
<dbReference type="Gene3D" id="2.40.50.140">
    <property type="entry name" value="Nucleic acid-binding proteins"/>
    <property type="match status" value="1"/>
</dbReference>
<dbReference type="HAMAP" id="MF_00031">
    <property type="entry name" value="DNA_HJ_migration_RuvA"/>
    <property type="match status" value="1"/>
</dbReference>
<dbReference type="InterPro" id="IPR013849">
    <property type="entry name" value="DNA_helicase_Holl-junc_RuvA_I"/>
</dbReference>
<dbReference type="InterPro" id="IPR012340">
    <property type="entry name" value="NA-bd_OB-fold"/>
</dbReference>
<dbReference type="InterPro" id="IPR000085">
    <property type="entry name" value="RuvA"/>
</dbReference>
<dbReference type="InterPro" id="IPR010994">
    <property type="entry name" value="RuvA_2-like"/>
</dbReference>
<dbReference type="InterPro" id="IPR011114">
    <property type="entry name" value="RuvA_C"/>
</dbReference>
<dbReference type="InterPro" id="IPR036267">
    <property type="entry name" value="RuvA_C_sf"/>
</dbReference>
<dbReference type="NCBIfam" id="NF011194">
    <property type="entry name" value="PRK14600.1"/>
    <property type="match status" value="1"/>
</dbReference>
<dbReference type="NCBIfam" id="TIGR00084">
    <property type="entry name" value="ruvA"/>
    <property type="match status" value="1"/>
</dbReference>
<dbReference type="Pfam" id="PF14520">
    <property type="entry name" value="HHH_5"/>
    <property type="match status" value="1"/>
</dbReference>
<dbReference type="Pfam" id="PF07499">
    <property type="entry name" value="RuvA_C"/>
    <property type="match status" value="1"/>
</dbReference>
<dbReference type="Pfam" id="PF01330">
    <property type="entry name" value="RuvA_N"/>
    <property type="match status" value="1"/>
</dbReference>
<dbReference type="SUPFAM" id="SSF46929">
    <property type="entry name" value="DNA helicase RuvA subunit, C-terminal domain"/>
    <property type="match status" value="1"/>
</dbReference>
<dbReference type="SUPFAM" id="SSF50249">
    <property type="entry name" value="Nucleic acid-binding proteins"/>
    <property type="match status" value="1"/>
</dbReference>
<dbReference type="SUPFAM" id="SSF47781">
    <property type="entry name" value="RuvA domain 2-like"/>
    <property type="match status" value="1"/>
</dbReference>
<comment type="function">
    <text evidence="1">The RuvA-RuvB-RuvC complex processes Holliday junction (HJ) DNA during genetic recombination and DNA repair, while the RuvA-RuvB complex plays an important role in the rescue of blocked DNA replication forks via replication fork reversal (RFR). RuvA specifically binds to HJ cruciform DNA, conferring on it an open structure. The RuvB hexamer acts as an ATP-dependent pump, pulling dsDNA into and through the RuvAB complex. HJ branch migration allows RuvC to scan DNA until it finds its consensus sequence, where it cleaves and resolves the cruciform DNA.</text>
</comment>
<comment type="subunit">
    <text evidence="1">Homotetramer. Forms an RuvA(8)-RuvB(12)-Holliday junction (HJ) complex. HJ DNA is sandwiched between 2 RuvA tetramers; dsDNA enters through RuvA and exits via RuvB. An RuvB hexamer assembles on each DNA strand where it exits the tetramer. Each RuvB hexamer is contacted by two RuvA subunits (via domain III) on 2 adjacent RuvB subunits; this complex drives branch migration. In the full resolvosome a probable DNA-RuvA(4)-RuvB(12)-RuvC(2) complex forms which resolves the HJ.</text>
</comment>
<comment type="subcellular location">
    <subcellularLocation>
        <location evidence="1">Cytoplasm</location>
    </subcellularLocation>
</comment>
<comment type="domain">
    <text evidence="1">Has three domains with a flexible linker between the domains II and III and assumes an 'L' shape. Domain III is highly mobile and contacts RuvB.</text>
</comment>
<comment type="similarity">
    <text evidence="1">Belongs to the RuvA family.</text>
</comment>
<keyword id="KW-0963">Cytoplasm</keyword>
<keyword id="KW-0227">DNA damage</keyword>
<keyword id="KW-0233">DNA recombination</keyword>
<keyword id="KW-0234">DNA repair</keyword>
<keyword id="KW-0238">DNA-binding</keyword>
<sequence length="190" mass="21145">MIGNLRGIVDEVCSDHIILNVNDVGYIVYLSAKTLSACSIGSRVKLLIDTYANSRENVTQLYGFISKEEQQCLRLLVKVSGVSYKTAMSILSKLTPEQLFLAIINEDKLALKVSGLGLKLINRIITELNGKVSKLEINNNHFHSISEDALSALINLGYERTKAYDTIKKIEDESPNLDTKDIIRMALKTI</sequence>
<proteinExistence type="inferred from homology"/>
<protein>
    <recommendedName>
        <fullName evidence="1">Holliday junction branch migration complex subunit RuvA</fullName>
    </recommendedName>
</protein>
<evidence type="ECO:0000255" key="1">
    <source>
        <dbReference type="HAMAP-Rule" id="MF_00031"/>
    </source>
</evidence>
<accession>B3CMH6</accession>
<feature type="chain" id="PRO_1000195185" description="Holliday junction branch migration complex subunit RuvA">
    <location>
        <begin position="1"/>
        <end position="190"/>
    </location>
</feature>
<feature type="region of interest" description="Domain I" evidence="1">
    <location>
        <begin position="1"/>
        <end position="65"/>
    </location>
</feature>
<feature type="region of interest" description="Domain II" evidence="1">
    <location>
        <begin position="66"/>
        <end position="143"/>
    </location>
</feature>
<feature type="region of interest" description="Flexible linker" evidence="1">
    <location>
        <begin position="144"/>
        <end position="147"/>
    </location>
</feature>
<feature type="region of interest" description="Domain III" evidence="1">
    <location>
        <begin position="147"/>
        <end position="190"/>
    </location>
</feature>
<organism>
    <name type="scientific">Wolbachia pipientis subsp. Culex pipiens (strain wPip)</name>
    <dbReference type="NCBI Taxonomy" id="570417"/>
    <lineage>
        <taxon>Bacteria</taxon>
        <taxon>Pseudomonadati</taxon>
        <taxon>Pseudomonadota</taxon>
        <taxon>Alphaproteobacteria</taxon>
        <taxon>Rickettsiales</taxon>
        <taxon>Anaplasmataceae</taxon>
        <taxon>Wolbachieae</taxon>
        <taxon>Wolbachia</taxon>
    </lineage>
</organism>
<reference key="1">
    <citation type="journal article" date="2008" name="Mol. Biol. Evol.">
        <title>Genome evolution of Wolbachia strain wPip from the Culex pipiens group.</title>
        <authorList>
            <person name="Klasson L."/>
            <person name="Walker T."/>
            <person name="Sebaihia M."/>
            <person name="Sanders M.J."/>
            <person name="Quail M.A."/>
            <person name="Lord A."/>
            <person name="Sanders S."/>
            <person name="Earl J."/>
            <person name="O'Neill S.L."/>
            <person name="Thomson N."/>
            <person name="Sinkins S.P."/>
            <person name="Parkhill J."/>
        </authorList>
    </citation>
    <scope>NUCLEOTIDE SEQUENCE [LARGE SCALE GENOMIC DNA]</scope>
    <source>
        <strain>wPip</strain>
    </source>
</reference>
<name>RUVA_WOLPP</name>